<evidence type="ECO:0000255" key="1">
    <source>
        <dbReference type="HAMAP-Rule" id="MF_00531"/>
    </source>
</evidence>
<evidence type="ECO:0000305" key="2"/>
<organism>
    <name type="scientific">Escherichia coli O7:K1 (strain IAI39 / ExPEC)</name>
    <dbReference type="NCBI Taxonomy" id="585057"/>
    <lineage>
        <taxon>Bacteria</taxon>
        <taxon>Pseudomonadati</taxon>
        <taxon>Pseudomonadota</taxon>
        <taxon>Gammaproteobacteria</taxon>
        <taxon>Enterobacterales</taxon>
        <taxon>Enterobacteriaceae</taxon>
        <taxon>Escherichia</taxon>
    </lineage>
</organism>
<accession>B7NLN5</accession>
<gene>
    <name evidence="1" type="primary">rpsS</name>
    <name type="ordered locus">ECIAI39_3810</name>
</gene>
<name>RS19_ECO7I</name>
<reference key="1">
    <citation type="journal article" date="2009" name="PLoS Genet.">
        <title>Organised genome dynamics in the Escherichia coli species results in highly diverse adaptive paths.</title>
        <authorList>
            <person name="Touchon M."/>
            <person name="Hoede C."/>
            <person name="Tenaillon O."/>
            <person name="Barbe V."/>
            <person name="Baeriswyl S."/>
            <person name="Bidet P."/>
            <person name="Bingen E."/>
            <person name="Bonacorsi S."/>
            <person name="Bouchier C."/>
            <person name="Bouvet O."/>
            <person name="Calteau A."/>
            <person name="Chiapello H."/>
            <person name="Clermont O."/>
            <person name="Cruveiller S."/>
            <person name="Danchin A."/>
            <person name="Diard M."/>
            <person name="Dossat C."/>
            <person name="Karoui M.E."/>
            <person name="Frapy E."/>
            <person name="Garry L."/>
            <person name="Ghigo J.M."/>
            <person name="Gilles A.M."/>
            <person name="Johnson J."/>
            <person name="Le Bouguenec C."/>
            <person name="Lescat M."/>
            <person name="Mangenot S."/>
            <person name="Martinez-Jehanne V."/>
            <person name="Matic I."/>
            <person name="Nassif X."/>
            <person name="Oztas S."/>
            <person name="Petit M.A."/>
            <person name="Pichon C."/>
            <person name="Rouy Z."/>
            <person name="Ruf C.S."/>
            <person name="Schneider D."/>
            <person name="Tourret J."/>
            <person name="Vacherie B."/>
            <person name="Vallenet D."/>
            <person name="Medigue C."/>
            <person name="Rocha E.P.C."/>
            <person name="Denamur E."/>
        </authorList>
    </citation>
    <scope>NUCLEOTIDE SEQUENCE [LARGE SCALE GENOMIC DNA]</scope>
    <source>
        <strain>IAI39 / ExPEC</strain>
    </source>
</reference>
<feature type="chain" id="PRO_1000127970" description="Small ribosomal subunit protein uS19">
    <location>
        <begin position="1"/>
        <end position="92"/>
    </location>
</feature>
<protein>
    <recommendedName>
        <fullName evidence="1">Small ribosomal subunit protein uS19</fullName>
    </recommendedName>
    <alternativeName>
        <fullName evidence="2">30S ribosomal protein S19</fullName>
    </alternativeName>
</protein>
<keyword id="KW-0687">Ribonucleoprotein</keyword>
<keyword id="KW-0689">Ribosomal protein</keyword>
<keyword id="KW-0694">RNA-binding</keyword>
<keyword id="KW-0699">rRNA-binding</keyword>
<dbReference type="EMBL" id="CU928164">
    <property type="protein sequence ID" value="CAR19924.1"/>
    <property type="molecule type" value="Genomic_DNA"/>
</dbReference>
<dbReference type="RefSeq" id="WP_001138117.1">
    <property type="nucleotide sequence ID" value="NC_011750.1"/>
</dbReference>
<dbReference type="RefSeq" id="YP_002409707.1">
    <property type="nucleotide sequence ID" value="NC_011750.1"/>
</dbReference>
<dbReference type="SMR" id="B7NLN5"/>
<dbReference type="STRING" id="585057.ECIAI39_3810"/>
<dbReference type="GeneID" id="98390438"/>
<dbReference type="KEGG" id="ect:ECIAI39_3810"/>
<dbReference type="PATRIC" id="fig|585057.6.peg.3947"/>
<dbReference type="HOGENOM" id="CLU_144911_0_1_6"/>
<dbReference type="Proteomes" id="UP000000749">
    <property type="component" value="Chromosome"/>
</dbReference>
<dbReference type="GO" id="GO:0005737">
    <property type="term" value="C:cytoplasm"/>
    <property type="evidence" value="ECO:0007669"/>
    <property type="project" value="UniProtKB-ARBA"/>
</dbReference>
<dbReference type="GO" id="GO:0015935">
    <property type="term" value="C:small ribosomal subunit"/>
    <property type="evidence" value="ECO:0007669"/>
    <property type="project" value="InterPro"/>
</dbReference>
<dbReference type="GO" id="GO:0019843">
    <property type="term" value="F:rRNA binding"/>
    <property type="evidence" value="ECO:0007669"/>
    <property type="project" value="UniProtKB-UniRule"/>
</dbReference>
<dbReference type="GO" id="GO:0003735">
    <property type="term" value="F:structural constituent of ribosome"/>
    <property type="evidence" value="ECO:0007669"/>
    <property type="project" value="InterPro"/>
</dbReference>
<dbReference type="GO" id="GO:0000028">
    <property type="term" value="P:ribosomal small subunit assembly"/>
    <property type="evidence" value="ECO:0007669"/>
    <property type="project" value="TreeGrafter"/>
</dbReference>
<dbReference type="GO" id="GO:0006412">
    <property type="term" value="P:translation"/>
    <property type="evidence" value="ECO:0007669"/>
    <property type="project" value="UniProtKB-UniRule"/>
</dbReference>
<dbReference type="FunFam" id="3.30.860.10:FF:000001">
    <property type="entry name" value="30S ribosomal protein S19"/>
    <property type="match status" value="1"/>
</dbReference>
<dbReference type="Gene3D" id="3.30.860.10">
    <property type="entry name" value="30s Ribosomal Protein S19, Chain A"/>
    <property type="match status" value="1"/>
</dbReference>
<dbReference type="HAMAP" id="MF_00531">
    <property type="entry name" value="Ribosomal_uS19"/>
    <property type="match status" value="1"/>
</dbReference>
<dbReference type="InterPro" id="IPR002222">
    <property type="entry name" value="Ribosomal_uS19"/>
</dbReference>
<dbReference type="InterPro" id="IPR005732">
    <property type="entry name" value="Ribosomal_uS19_bac-type"/>
</dbReference>
<dbReference type="InterPro" id="IPR020934">
    <property type="entry name" value="Ribosomal_uS19_CS"/>
</dbReference>
<dbReference type="InterPro" id="IPR023575">
    <property type="entry name" value="Ribosomal_uS19_SF"/>
</dbReference>
<dbReference type="NCBIfam" id="TIGR01050">
    <property type="entry name" value="rpsS_bact"/>
    <property type="match status" value="1"/>
</dbReference>
<dbReference type="PANTHER" id="PTHR11880">
    <property type="entry name" value="RIBOSOMAL PROTEIN S19P FAMILY MEMBER"/>
    <property type="match status" value="1"/>
</dbReference>
<dbReference type="PANTHER" id="PTHR11880:SF8">
    <property type="entry name" value="SMALL RIBOSOMAL SUBUNIT PROTEIN US19M"/>
    <property type="match status" value="1"/>
</dbReference>
<dbReference type="Pfam" id="PF00203">
    <property type="entry name" value="Ribosomal_S19"/>
    <property type="match status" value="1"/>
</dbReference>
<dbReference type="PIRSF" id="PIRSF002144">
    <property type="entry name" value="Ribosomal_S19"/>
    <property type="match status" value="1"/>
</dbReference>
<dbReference type="PRINTS" id="PR00975">
    <property type="entry name" value="RIBOSOMALS19"/>
</dbReference>
<dbReference type="SUPFAM" id="SSF54570">
    <property type="entry name" value="Ribosomal protein S19"/>
    <property type="match status" value="1"/>
</dbReference>
<dbReference type="PROSITE" id="PS00323">
    <property type="entry name" value="RIBOSOMAL_S19"/>
    <property type="match status" value="1"/>
</dbReference>
<proteinExistence type="inferred from homology"/>
<sequence length="92" mass="10430">MPRSLKKGPFIDLHLLKKVEKAVESGDKKPLRTWSRRSTIFPNMIGLTIAVHNGRQHVPVFVTDEMVGHKLGEFAPTRTYRGHAADKKAKKK</sequence>
<comment type="function">
    <text evidence="1">Protein S19 forms a complex with S13 that binds strongly to the 16S ribosomal RNA.</text>
</comment>
<comment type="similarity">
    <text evidence="1">Belongs to the universal ribosomal protein uS19 family.</text>
</comment>